<keyword id="KW-0325">Glycoprotein</keyword>
<keyword id="KW-0406">Ion transport</keyword>
<keyword id="KW-0472">Membrane</keyword>
<keyword id="KW-0597">Phosphoprotein</keyword>
<keyword id="KW-0630">Potassium</keyword>
<keyword id="KW-0633">Potassium transport</keyword>
<keyword id="KW-1185">Reference proteome</keyword>
<keyword id="KW-0812">Transmembrane</keyword>
<keyword id="KW-1133">Transmembrane helix</keyword>
<keyword id="KW-0813">Transport</keyword>
<comment type="function">
    <text>This protein is required for high-affinity potassium transport.</text>
</comment>
<comment type="subcellular location">
    <subcellularLocation>
        <location>Membrane</location>
        <topology>Multi-pass membrane protein</topology>
    </subcellularLocation>
</comment>
<comment type="similarity">
    <text evidence="3">Belongs to the TrkH potassium transport family.</text>
</comment>
<protein>
    <recommendedName>
        <fullName>High-affinity potassium transport protein</fullName>
    </recommendedName>
</protein>
<reference key="1">
    <citation type="journal article" date="1988" name="Mol. Cell. Biol.">
        <title>TRK1 encodes a plasma membrane protein required for high-affinity potassium transport in Saccharomyces cerevisiae.</title>
        <authorList>
            <person name="Gaber R.F."/>
            <person name="Styles C.A."/>
            <person name="Fink G.R."/>
        </authorList>
    </citation>
    <scope>NUCLEOTIDE SEQUENCE [GENOMIC DNA]</scope>
</reference>
<reference key="2">
    <citation type="journal article" date="1996" name="Yeast">
        <title>Sequencing analysis of a 40.2 kb fragment of yeast chromosome X reveals 19 open reading frames including URA2 (5' end), TRK1, PBS2, SPT10, GCD14, RPE1, PHO86, NCA3, ASF1, CCT7, GZF3, two tRNA genes, three remnant delta elements and a Ty4 transposon.</title>
        <authorList>
            <person name="Cziepluch C."/>
            <person name="Kordes E."/>
            <person name="Pujol A."/>
            <person name="Jauniaux J.-C."/>
        </authorList>
    </citation>
    <scope>NUCLEOTIDE SEQUENCE [GENOMIC DNA]</scope>
    <source>
        <strain>ATCC 96604 / S288c / FY1679</strain>
    </source>
</reference>
<reference key="3">
    <citation type="journal article" date="1996" name="EMBO J.">
        <title>Complete nucleotide sequence of Saccharomyces cerevisiae chromosome X.</title>
        <authorList>
            <person name="Galibert F."/>
            <person name="Alexandraki D."/>
            <person name="Baur A."/>
            <person name="Boles E."/>
            <person name="Chalwatzis N."/>
            <person name="Chuat J.-C."/>
            <person name="Coster F."/>
            <person name="Cziepluch C."/>
            <person name="de Haan M."/>
            <person name="Domdey H."/>
            <person name="Durand P."/>
            <person name="Entian K.-D."/>
            <person name="Gatius M."/>
            <person name="Goffeau A."/>
            <person name="Grivell L.A."/>
            <person name="Hennemann A."/>
            <person name="Herbert C.J."/>
            <person name="Heumann K."/>
            <person name="Hilger F."/>
            <person name="Hollenberg C.P."/>
            <person name="Huang M.-E."/>
            <person name="Jacq C."/>
            <person name="Jauniaux J.-C."/>
            <person name="Katsoulou C."/>
            <person name="Kirchrath L."/>
            <person name="Kleine K."/>
            <person name="Kordes E."/>
            <person name="Koetter P."/>
            <person name="Liebl S."/>
            <person name="Louis E.J."/>
            <person name="Manus V."/>
            <person name="Mewes H.-W."/>
            <person name="Miosga T."/>
            <person name="Obermaier B."/>
            <person name="Perea J."/>
            <person name="Pohl T.M."/>
            <person name="Portetelle D."/>
            <person name="Pujol A."/>
            <person name="Purnelle B."/>
            <person name="Ramezani Rad M."/>
            <person name="Rasmussen S.W."/>
            <person name="Rose M."/>
            <person name="Rossau R."/>
            <person name="Schaaff-Gerstenschlaeger I."/>
            <person name="Smits P.H.M."/>
            <person name="Scarcez T."/>
            <person name="Soriano N."/>
            <person name="To Van D."/>
            <person name="Tzermia M."/>
            <person name="Van Broekhoven A."/>
            <person name="Vandenbol M."/>
            <person name="Wedler H."/>
            <person name="von Wettstein D."/>
            <person name="Wambutt R."/>
            <person name="Zagulski M."/>
            <person name="Zollner A."/>
            <person name="Karpfinger-Hartl L."/>
        </authorList>
    </citation>
    <scope>NUCLEOTIDE SEQUENCE [LARGE SCALE GENOMIC DNA]</scope>
    <source>
        <strain>ATCC 204508 / S288c</strain>
    </source>
</reference>
<reference key="4">
    <citation type="journal article" date="2014" name="G3 (Bethesda)">
        <title>The reference genome sequence of Saccharomyces cerevisiae: Then and now.</title>
        <authorList>
            <person name="Engel S.R."/>
            <person name="Dietrich F.S."/>
            <person name="Fisk D.G."/>
            <person name="Binkley G."/>
            <person name="Balakrishnan R."/>
            <person name="Costanzo M.C."/>
            <person name="Dwight S.S."/>
            <person name="Hitz B.C."/>
            <person name="Karra K."/>
            <person name="Nash R.S."/>
            <person name="Weng S."/>
            <person name="Wong E.D."/>
            <person name="Lloyd P."/>
            <person name="Skrzypek M.S."/>
            <person name="Miyasato S.R."/>
            <person name="Simison M."/>
            <person name="Cherry J.M."/>
        </authorList>
    </citation>
    <scope>GENOME REANNOTATION</scope>
    <source>
        <strain>ATCC 204508 / S288c</strain>
    </source>
</reference>
<reference key="5">
    <citation type="journal article" date="2007" name="J. Proteome Res.">
        <title>Large-scale phosphorylation analysis of alpha-factor-arrested Saccharomyces cerevisiae.</title>
        <authorList>
            <person name="Li X."/>
            <person name="Gerber S.A."/>
            <person name="Rudner A.D."/>
            <person name="Beausoleil S.A."/>
            <person name="Haas W."/>
            <person name="Villen J."/>
            <person name="Elias J.E."/>
            <person name="Gygi S.P."/>
        </authorList>
    </citation>
    <scope>PHOSPHORYLATION [LARGE SCALE ANALYSIS] AT SER-414</scope>
    <scope>IDENTIFICATION BY MASS SPECTROMETRY [LARGE SCALE ANALYSIS]</scope>
    <source>
        <strain>ADR376</strain>
    </source>
</reference>
<reference key="6">
    <citation type="journal article" date="2009" name="Science">
        <title>Global analysis of Cdk1 substrate phosphorylation sites provides insights into evolution.</title>
        <authorList>
            <person name="Holt L.J."/>
            <person name="Tuch B.B."/>
            <person name="Villen J."/>
            <person name="Johnson A.D."/>
            <person name="Gygi S.P."/>
            <person name="Morgan D.O."/>
        </authorList>
    </citation>
    <scope>PHOSPHORYLATION [LARGE SCALE ANALYSIS] AT SER-15 AND SER-534</scope>
    <scope>IDENTIFICATION BY MASS SPECTROMETRY [LARGE SCALE ANALYSIS]</scope>
</reference>
<name>TRK1_YEAST</name>
<gene>
    <name type="primary">TRK1</name>
    <name type="ordered locus">YJL129C</name>
    <name type="ORF">J0693</name>
</gene>
<organism>
    <name type="scientific">Saccharomyces cerevisiae (strain ATCC 204508 / S288c)</name>
    <name type="common">Baker's yeast</name>
    <dbReference type="NCBI Taxonomy" id="559292"/>
    <lineage>
        <taxon>Eukaryota</taxon>
        <taxon>Fungi</taxon>
        <taxon>Dikarya</taxon>
        <taxon>Ascomycota</taxon>
        <taxon>Saccharomycotina</taxon>
        <taxon>Saccharomycetes</taxon>
        <taxon>Saccharomycetales</taxon>
        <taxon>Saccharomycetaceae</taxon>
        <taxon>Saccharomyces</taxon>
    </lineage>
</organism>
<proteinExistence type="evidence at protein level"/>
<feature type="chain" id="PRO_0000070462" description="High-affinity potassium transport protein">
    <location>
        <begin position="1"/>
        <end position="1235"/>
    </location>
</feature>
<feature type="transmembrane region" description="Helical" evidence="1">
    <location>
        <begin position="49"/>
        <end position="70"/>
    </location>
</feature>
<feature type="transmembrane region" description="Helical" evidence="1">
    <location>
        <begin position="78"/>
        <end position="98"/>
    </location>
</feature>
<feature type="transmembrane region" description="Helical" evidence="1">
    <location>
        <begin position="107"/>
        <end position="127"/>
    </location>
</feature>
<feature type="transmembrane region" description="Helical" evidence="1">
    <location>
        <begin position="778"/>
        <end position="800"/>
    </location>
</feature>
<feature type="transmembrane region" description="Helical" evidence="1">
    <location>
        <begin position="813"/>
        <end position="834"/>
    </location>
</feature>
<feature type="transmembrane region" description="Helical" evidence="1">
    <location>
        <begin position="838"/>
        <end position="858"/>
    </location>
</feature>
<feature type="transmembrane region" description="Helical" evidence="1">
    <location>
        <begin position="862"/>
        <end position="882"/>
    </location>
</feature>
<feature type="transmembrane region" description="Helical" evidence="1">
    <location>
        <begin position="898"/>
        <end position="918"/>
    </location>
</feature>
<feature type="transmembrane region" description="Helical" evidence="1">
    <location>
        <begin position="923"/>
        <end position="943"/>
    </location>
</feature>
<feature type="transmembrane region" description="Helical" evidence="1">
    <location>
        <begin position="971"/>
        <end position="991"/>
    </location>
</feature>
<feature type="transmembrane region" description="Helical" evidence="1">
    <location>
        <begin position="1078"/>
        <end position="1098"/>
    </location>
</feature>
<feature type="transmembrane region" description="Helical" evidence="1">
    <location>
        <begin position="1111"/>
        <end position="1131"/>
    </location>
</feature>
<feature type="region of interest" description="Disordered" evidence="2">
    <location>
        <begin position="161"/>
        <end position="310"/>
    </location>
</feature>
<feature type="region of interest" description="Disordered" evidence="2">
    <location>
        <begin position="323"/>
        <end position="344"/>
    </location>
</feature>
<feature type="region of interest" description="Disordered" evidence="2">
    <location>
        <begin position="361"/>
        <end position="441"/>
    </location>
</feature>
<feature type="region of interest" description="Disordered" evidence="2">
    <location>
        <begin position="488"/>
        <end position="565"/>
    </location>
</feature>
<feature type="region of interest" description="Disordered" evidence="2">
    <location>
        <begin position="671"/>
        <end position="706"/>
    </location>
</feature>
<feature type="region of interest" description="Disordered" evidence="2">
    <location>
        <begin position="1003"/>
        <end position="1063"/>
    </location>
</feature>
<feature type="compositionally biased region" description="Polar residues" evidence="2">
    <location>
        <begin position="164"/>
        <end position="179"/>
    </location>
</feature>
<feature type="compositionally biased region" description="Basic and acidic residues" evidence="2">
    <location>
        <begin position="198"/>
        <end position="217"/>
    </location>
</feature>
<feature type="compositionally biased region" description="Low complexity" evidence="2">
    <location>
        <begin position="219"/>
        <end position="232"/>
    </location>
</feature>
<feature type="compositionally biased region" description="Acidic residues" evidence="2">
    <location>
        <begin position="237"/>
        <end position="247"/>
    </location>
</feature>
<feature type="compositionally biased region" description="Polar residues" evidence="2">
    <location>
        <begin position="248"/>
        <end position="274"/>
    </location>
</feature>
<feature type="compositionally biased region" description="Polar residues" evidence="2">
    <location>
        <begin position="370"/>
        <end position="415"/>
    </location>
</feature>
<feature type="compositionally biased region" description="Polar residues" evidence="2">
    <location>
        <begin position="490"/>
        <end position="502"/>
    </location>
</feature>
<feature type="compositionally biased region" description="Acidic residues" evidence="2">
    <location>
        <begin position="510"/>
        <end position="539"/>
    </location>
</feature>
<feature type="compositionally biased region" description="Basic and acidic residues" evidence="2">
    <location>
        <begin position="540"/>
        <end position="563"/>
    </location>
</feature>
<feature type="compositionally biased region" description="Polar residues" evidence="2">
    <location>
        <begin position="680"/>
        <end position="706"/>
    </location>
</feature>
<feature type="compositionally biased region" description="Acidic residues" evidence="2">
    <location>
        <begin position="1010"/>
        <end position="1031"/>
    </location>
</feature>
<feature type="compositionally biased region" description="Low complexity" evidence="2">
    <location>
        <begin position="1036"/>
        <end position="1049"/>
    </location>
</feature>
<feature type="modified residue" description="Phosphoserine" evidence="5">
    <location>
        <position position="15"/>
    </location>
</feature>
<feature type="modified residue" description="Phosphoserine" evidence="4">
    <location>
        <position position="414"/>
    </location>
</feature>
<feature type="modified residue" description="Phosphoserine" evidence="5">
    <location>
        <position position="534"/>
    </location>
</feature>
<feature type="glycosylation site" description="N-linked (GlcNAc...) asparagine" evidence="1">
    <location>
        <position position="100"/>
    </location>
</feature>
<feature type="glycosylation site" description="N-linked (GlcNAc...) asparagine" evidence="1">
    <location>
        <position position="169"/>
    </location>
</feature>
<feature type="glycosylation site" description="N-linked (GlcNAc...) asparagine" evidence="1">
    <location>
        <position position="222"/>
    </location>
</feature>
<feature type="glycosylation site" description="N-linked (GlcNAc...) asparagine" evidence="1">
    <location>
        <position position="227"/>
    </location>
</feature>
<feature type="glycosylation site" description="N-linked (GlcNAc...) asparagine" evidence="1">
    <location>
        <position position="251"/>
    </location>
</feature>
<feature type="glycosylation site" description="N-linked (GlcNAc...) asparagine" evidence="1">
    <location>
        <position position="369"/>
    </location>
</feature>
<feature type="glycosylation site" description="N-linked (GlcNAc...) asparagine" evidence="1">
    <location>
        <position position="383"/>
    </location>
</feature>
<feature type="glycosylation site" description="N-linked (GlcNAc...) asparagine" evidence="1">
    <location>
        <position position="497"/>
    </location>
</feature>
<feature type="glycosylation site" description="N-linked (GlcNAc...) asparagine" evidence="1">
    <location>
        <position position="501"/>
    </location>
</feature>
<feature type="glycosylation site" description="N-linked (GlcNAc...) asparagine" evidence="1">
    <location>
        <position position="532"/>
    </location>
</feature>
<feature type="glycosylation site" description="N-linked (GlcNAc...) asparagine" evidence="1">
    <location>
        <position position="580"/>
    </location>
</feature>
<feature type="glycosylation site" description="N-linked (GlcNAc...) asparagine" evidence="1">
    <location>
        <position position="677"/>
    </location>
</feature>
<feature type="glycosylation site" description="N-linked (GlcNAc...) asparagine" evidence="1">
    <location>
        <position position="919"/>
    </location>
</feature>
<feature type="glycosylation site" description="N-linked (GlcNAc...) asparagine" evidence="1">
    <location>
        <position position="1030"/>
    </location>
</feature>
<feature type="glycosylation site" description="N-linked (GlcNAc...) asparagine" evidence="1">
    <location>
        <position position="1135"/>
    </location>
</feature>
<sequence>MHFRRTMSRVPTLASLEIRYKKSFGHKFRDFIALCGHYFAPVKKYIFPSFIAVHYFYTISLTLITSILLYPIKNTRYIDTLFLAAGAVTQGGLNTVDINNLSLYQQIVLYIVCCISTPIAVHSCLAFVRLYWFERYFDGIRDSSRRNFKMRRTKTILERELTARTMTKNRTGTQRTSYPRKQAKTDDFQEKLFSGEMVNRDEQDSVHSDQNSHDISRDSSNNNTNHNGSSGSLDDFVKEDETDDNGEYQENNSYSTVGSSSNTVADESLNQKPKPSSLRFDEPHSKQRPARVPSEKFAKRRGSRDISPADMYRSIMMLQGKHEATAEDEGPPLVIGSPADGTRYKSNVNKLKKATGINGNKIKIRDKGNESNTDQNSVSSEANSTASVSDESSLHTNFGNKVPSLRTNTHRSNSGPIAITDNAETDKKHGPSIQFDITKPPRKISKRVSTFDDLNPKSSVLYRKKASKKYLMKHFPKARRIRQQIKRRLSTGSIEKNSSNNVSDRKPITDMDDDDDDDDNDGDNNEEYFADNESGDEDERVQQSEPHSDSELKSHQQQQEKHQLQQNLHRMYKTKSFDDNRSRAVPMERSRTIDMAEAKDLNELARTPDFQKMVYQNWKAHHRKKPNFRKRGWNNKIFEHGPYASDSDRNYPDNSNTGNSILHYAESILHHDGSHKNGSEEASSDSNENIYSTNGGSDHNGLNNYPTYNDDEEGYYGLHFDTDYDLDPRHDLSKGSGKTYLSWQPTIGRNSNFLGLTRAQKDELGGVEYRAIKLLCTILVVYYVGWHIVAFVMLVPWIILKKHYSEVVRDDGVSPTWWGFWTAMSAFNDLGLTLTPNSMMSFNKAVYPLIVMIWFIIIGNTGFPILLRCIIWIMFKISPDLSQMRESLGFLLDHPRRCFTLLFPKAATWWLLLTLAGLNITDWILFIILDFGSTVVKSLSKGYRVLVGLFQSVSTRTAGFSVVDLSQLHPSIQVSYMLMMYVSVLPLAISIRRTNVYEEQSLGLYGDMGGEPEDTDTEDDGNDEDDDEENESHEGQSSQRSSSNNNNNNNRKKKKKKKTENPNEISTKSFIGAHLRKQLSFDLWFLFLGLFIICICEGDKIKDVQEPNFNIFAILFEIVSAYGTVGLSLGYPDTNQSFSRQFTTLSKLVIIAMLIRGKNRGLPYSLDRAIILPSDRLEHIDHLEGMKLKRQARTNTEDPMTEHFKRSFTDVKHRWGALKRKTTHSRNPKRSSTTL</sequence>
<accession>P12685</accession>
<accession>D6VW56</accession>
<dbReference type="EMBL" id="M21328">
    <property type="protein sequence ID" value="AAA34728.1"/>
    <property type="molecule type" value="Genomic_DNA"/>
</dbReference>
<dbReference type="EMBL" id="Z49404">
    <property type="protein sequence ID" value="CAA89424.1"/>
    <property type="molecule type" value="Genomic_DNA"/>
</dbReference>
<dbReference type="EMBL" id="BK006943">
    <property type="protein sequence ID" value="DAA08672.1"/>
    <property type="molecule type" value="Genomic_DNA"/>
</dbReference>
<dbReference type="PIR" id="S05849">
    <property type="entry name" value="PWBYH"/>
</dbReference>
<dbReference type="RefSeq" id="NP_012406.1">
    <property type="nucleotide sequence ID" value="NM_001181562.1"/>
</dbReference>
<dbReference type="SMR" id="P12685"/>
<dbReference type="BioGRID" id="33627">
    <property type="interactions" value="132"/>
</dbReference>
<dbReference type="DIP" id="DIP-7454N"/>
<dbReference type="FunCoup" id="P12685">
    <property type="interactions" value="30"/>
</dbReference>
<dbReference type="IntAct" id="P12685">
    <property type="interactions" value="2"/>
</dbReference>
<dbReference type="MINT" id="P12685"/>
<dbReference type="STRING" id="4932.YJL129C"/>
<dbReference type="TCDB" id="2.A.38.2.1">
    <property type="family name" value="the k(+) transporter (trk) family"/>
</dbReference>
<dbReference type="GlyCosmos" id="P12685">
    <property type="glycosylation" value="15 sites, No reported glycans"/>
</dbReference>
<dbReference type="GlyGen" id="P12685">
    <property type="glycosylation" value="15 sites"/>
</dbReference>
<dbReference type="iPTMnet" id="P12685"/>
<dbReference type="PaxDb" id="4932-YJL129C"/>
<dbReference type="PeptideAtlas" id="P12685"/>
<dbReference type="EnsemblFungi" id="YJL129C_mRNA">
    <property type="protein sequence ID" value="YJL129C"/>
    <property type="gene ID" value="YJL129C"/>
</dbReference>
<dbReference type="GeneID" id="853312"/>
<dbReference type="KEGG" id="sce:YJL129C"/>
<dbReference type="AGR" id="SGD:S000003665"/>
<dbReference type="SGD" id="S000003665">
    <property type="gene designation" value="TRK1"/>
</dbReference>
<dbReference type="VEuPathDB" id="FungiDB:YJL129C"/>
<dbReference type="eggNOG" id="KOG1341">
    <property type="taxonomic scope" value="Eukaryota"/>
</dbReference>
<dbReference type="GeneTree" id="ENSGT00940000176441"/>
<dbReference type="HOGENOM" id="CLU_005947_0_0_1"/>
<dbReference type="InParanoid" id="P12685"/>
<dbReference type="OMA" id="MVNRDEQ"/>
<dbReference type="OrthoDB" id="9999863at2759"/>
<dbReference type="BioCyc" id="MetaCyc:G3O-31579-MONOMER"/>
<dbReference type="BioCyc" id="YEAST:G3O-31579-MONOMER"/>
<dbReference type="BioGRID-ORCS" id="853312">
    <property type="hits" value="0 hits in 10 CRISPR screens"/>
</dbReference>
<dbReference type="PRO" id="PR:P12685"/>
<dbReference type="Proteomes" id="UP000002311">
    <property type="component" value="Chromosome X"/>
</dbReference>
<dbReference type="RNAct" id="P12685">
    <property type="molecule type" value="protein"/>
</dbReference>
<dbReference type="GO" id="GO:0071944">
    <property type="term" value="C:cell periphery"/>
    <property type="evidence" value="ECO:0007005"/>
    <property type="project" value="SGD"/>
</dbReference>
<dbReference type="GO" id="GO:0045121">
    <property type="term" value="C:membrane raft"/>
    <property type="evidence" value="ECO:0000314"/>
    <property type="project" value="SGD"/>
</dbReference>
<dbReference type="GO" id="GO:0005886">
    <property type="term" value="C:plasma membrane"/>
    <property type="evidence" value="ECO:0000314"/>
    <property type="project" value="SGD"/>
</dbReference>
<dbReference type="GO" id="GO:0140107">
    <property type="term" value="F:high-affinity potassium ion transmembrane transporter activity"/>
    <property type="evidence" value="ECO:0000318"/>
    <property type="project" value="GO_Central"/>
</dbReference>
<dbReference type="GO" id="GO:0015079">
    <property type="term" value="F:potassium ion transmembrane transporter activity"/>
    <property type="evidence" value="ECO:0000314"/>
    <property type="project" value="SGD"/>
</dbReference>
<dbReference type="GO" id="GO:0006874">
    <property type="term" value="P:intracellular calcium ion homeostasis"/>
    <property type="evidence" value="ECO:0000315"/>
    <property type="project" value="SGD"/>
</dbReference>
<dbReference type="GO" id="GO:0030007">
    <property type="term" value="P:intracellular potassium ion homeostasis"/>
    <property type="evidence" value="ECO:0000314"/>
    <property type="project" value="SGD"/>
</dbReference>
<dbReference type="GO" id="GO:1990573">
    <property type="term" value="P:potassium ion import across plasma membrane"/>
    <property type="evidence" value="ECO:0000318"/>
    <property type="project" value="GO_Central"/>
</dbReference>
<dbReference type="InterPro" id="IPR003445">
    <property type="entry name" value="Cat_transpt"/>
</dbReference>
<dbReference type="InterPro" id="IPR004773">
    <property type="entry name" value="K/Na_transp_Trk1/HKT1"/>
</dbReference>
<dbReference type="InterPro" id="IPR015958">
    <property type="entry name" value="Trk1_fungi"/>
</dbReference>
<dbReference type="InterPro" id="IPR051143">
    <property type="entry name" value="TrkH_K-transport"/>
</dbReference>
<dbReference type="NCBIfam" id="TIGR00934">
    <property type="entry name" value="2a38euk"/>
    <property type="match status" value="1"/>
</dbReference>
<dbReference type="PANTHER" id="PTHR31064:SF30">
    <property type="entry name" value="HIGH-AFFINITY POTASSIUM TRANSPORT PROTEIN-RELATED"/>
    <property type="match status" value="1"/>
</dbReference>
<dbReference type="PANTHER" id="PTHR31064">
    <property type="entry name" value="POTASSIUM TRANSPORT PROTEIN DDB_G0292412-RELATED"/>
    <property type="match status" value="1"/>
</dbReference>
<dbReference type="Pfam" id="PF02386">
    <property type="entry name" value="TrkH"/>
    <property type="match status" value="1"/>
</dbReference>
<dbReference type="PIRSF" id="PIRSF002450">
    <property type="entry name" value="K+_transpter_TRK"/>
    <property type="match status" value="1"/>
</dbReference>
<evidence type="ECO:0000255" key="1"/>
<evidence type="ECO:0000256" key="2">
    <source>
        <dbReference type="SAM" id="MobiDB-lite"/>
    </source>
</evidence>
<evidence type="ECO:0000305" key="3"/>
<evidence type="ECO:0007744" key="4">
    <source>
    </source>
</evidence>
<evidence type="ECO:0007744" key="5">
    <source>
    </source>
</evidence>